<gene>
    <name evidence="1" type="primary">xseA</name>
    <name type="ordered locus">SeD_A2877</name>
</gene>
<reference key="1">
    <citation type="journal article" date="2011" name="J. Bacteriol.">
        <title>Comparative genomics of 28 Salmonella enterica isolates: evidence for CRISPR-mediated adaptive sublineage evolution.</title>
        <authorList>
            <person name="Fricke W.F."/>
            <person name="Mammel M.K."/>
            <person name="McDermott P.F."/>
            <person name="Tartera C."/>
            <person name="White D.G."/>
            <person name="Leclerc J.E."/>
            <person name="Ravel J."/>
            <person name="Cebula T.A."/>
        </authorList>
    </citation>
    <scope>NUCLEOTIDE SEQUENCE [LARGE SCALE GENOMIC DNA]</scope>
    <source>
        <strain>CT_02021853</strain>
    </source>
</reference>
<name>EX7L_SALDC</name>
<protein>
    <recommendedName>
        <fullName evidence="1">Exodeoxyribonuclease 7 large subunit</fullName>
        <ecNumber evidence="1">3.1.11.6</ecNumber>
    </recommendedName>
    <alternativeName>
        <fullName evidence="1">Exodeoxyribonuclease VII large subunit</fullName>
        <shortName evidence="1">Exonuclease VII large subunit</shortName>
    </alternativeName>
</protein>
<keyword id="KW-0963">Cytoplasm</keyword>
<keyword id="KW-0269">Exonuclease</keyword>
<keyword id="KW-0378">Hydrolase</keyword>
<keyword id="KW-0540">Nuclease</keyword>
<sequence>MLSSQTSSIFTVSRLNQTVRLLLEQEMGQVWISGEISNFTQPASGHWYFTLKDDTAQVRCAMFRNSNRRVTFRPQHGQQVLVRANITLYEPRGDYQIIAESMQPAGEGLLQQKYEQLKAKLQAEGLFDQQHKQPLPSPAHCVGVITSKTGAALHDILHVLKRRDPSLPVIIYPTAVQGDDAPGQIVRAIELANARGECDVLIVGRGGGSLEDLWSFNDERVARAIFASRIPVVSAVGHETDVTIADFVADLRAPTPSAAAEIVSRNQQELLRQIQSAQQRLGMAMDYYLANRSRRFTQIFHRLQQQHPQLRLARQQTALERLRQRMGFALEARIKQANQRQQRVSQRLSQQNPQPRIHRAQSRIQQLEYRLTENIRSRLSEQRERFGNAVTHLEAVSPLATLARGYTVSTTTDGKVLKKIKQVKAGDIMTTRLEDGWLESEVKSVTPGT</sequence>
<evidence type="ECO:0000255" key="1">
    <source>
        <dbReference type="HAMAP-Rule" id="MF_00378"/>
    </source>
</evidence>
<accession>B5FR54</accession>
<dbReference type="EC" id="3.1.11.6" evidence="1"/>
<dbReference type="EMBL" id="CP001144">
    <property type="protein sequence ID" value="ACH75056.1"/>
    <property type="molecule type" value="Genomic_DNA"/>
</dbReference>
<dbReference type="RefSeq" id="WP_000953167.1">
    <property type="nucleotide sequence ID" value="NC_011205.1"/>
</dbReference>
<dbReference type="SMR" id="B5FR54"/>
<dbReference type="KEGG" id="sed:SeD_A2877"/>
<dbReference type="HOGENOM" id="CLU_023625_3_1_6"/>
<dbReference type="Proteomes" id="UP000008322">
    <property type="component" value="Chromosome"/>
</dbReference>
<dbReference type="GO" id="GO:0005737">
    <property type="term" value="C:cytoplasm"/>
    <property type="evidence" value="ECO:0007669"/>
    <property type="project" value="UniProtKB-SubCell"/>
</dbReference>
<dbReference type="GO" id="GO:0009318">
    <property type="term" value="C:exodeoxyribonuclease VII complex"/>
    <property type="evidence" value="ECO:0007669"/>
    <property type="project" value="InterPro"/>
</dbReference>
<dbReference type="GO" id="GO:0008855">
    <property type="term" value="F:exodeoxyribonuclease VII activity"/>
    <property type="evidence" value="ECO:0007669"/>
    <property type="project" value="UniProtKB-UniRule"/>
</dbReference>
<dbReference type="GO" id="GO:0003676">
    <property type="term" value="F:nucleic acid binding"/>
    <property type="evidence" value="ECO:0007669"/>
    <property type="project" value="InterPro"/>
</dbReference>
<dbReference type="GO" id="GO:0006308">
    <property type="term" value="P:DNA catabolic process"/>
    <property type="evidence" value="ECO:0007669"/>
    <property type="project" value="UniProtKB-UniRule"/>
</dbReference>
<dbReference type="CDD" id="cd04489">
    <property type="entry name" value="ExoVII_LU_OBF"/>
    <property type="match status" value="1"/>
</dbReference>
<dbReference type="HAMAP" id="MF_00378">
    <property type="entry name" value="Exonuc_7_L"/>
    <property type="match status" value="1"/>
</dbReference>
<dbReference type="InterPro" id="IPR003753">
    <property type="entry name" value="Exonuc_VII_L"/>
</dbReference>
<dbReference type="InterPro" id="IPR020579">
    <property type="entry name" value="Exonuc_VII_lsu_C"/>
</dbReference>
<dbReference type="InterPro" id="IPR025824">
    <property type="entry name" value="OB-fold_nuc-bd_dom"/>
</dbReference>
<dbReference type="NCBIfam" id="TIGR00237">
    <property type="entry name" value="xseA"/>
    <property type="match status" value="1"/>
</dbReference>
<dbReference type="PANTHER" id="PTHR30008">
    <property type="entry name" value="EXODEOXYRIBONUCLEASE 7 LARGE SUBUNIT"/>
    <property type="match status" value="1"/>
</dbReference>
<dbReference type="PANTHER" id="PTHR30008:SF0">
    <property type="entry name" value="EXODEOXYRIBONUCLEASE 7 LARGE SUBUNIT"/>
    <property type="match status" value="1"/>
</dbReference>
<dbReference type="Pfam" id="PF02601">
    <property type="entry name" value="Exonuc_VII_L"/>
    <property type="match status" value="1"/>
</dbReference>
<dbReference type="Pfam" id="PF13742">
    <property type="entry name" value="tRNA_anti_2"/>
    <property type="match status" value="1"/>
</dbReference>
<comment type="function">
    <text evidence="1">Bidirectionally degrades single-stranded DNA into large acid-insoluble oligonucleotides, which are then degraded further into small acid-soluble oligonucleotides.</text>
</comment>
<comment type="catalytic activity">
    <reaction evidence="1">
        <text>Exonucleolytic cleavage in either 5'- to 3'- or 3'- to 5'-direction to yield nucleoside 5'-phosphates.</text>
        <dbReference type="EC" id="3.1.11.6"/>
    </reaction>
</comment>
<comment type="subunit">
    <text evidence="1">Heterooligomer composed of large and small subunits.</text>
</comment>
<comment type="subcellular location">
    <subcellularLocation>
        <location evidence="1">Cytoplasm</location>
    </subcellularLocation>
</comment>
<comment type="similarity">
    <text evidence="1">Belongs to the XseA family.</text>
</comment>
<proteinExistence type="inferred from homology"/>
<feature type="chain" id="PRO_1000122081" description="Exodeoxyribonuclease 7 large subunit">
    <location>
        <begin position="1"/>
        <end position="449"/>
    </location>
</feature>
<organism>
    <name type="scientific">Salmonella dublin (strain CT_02021853)</name>
    <dbReference type="NCBI Taxonomy" id="439851"/>
    <lineage>
        <taxon>Bacteria</taxon>
        <taxon>Pseudomonadati</taxon>
        <taxon>Pseudomonadota</taxon>
        <taxon>Gammaproteobacteria</taxon>
        <taxon>Enterobacterales</taxon>
        <taxon>Enterobacteriaceae</taxon>
        <taxon>Salmonella</taxon>
    </lineage>
</organism>